<feature type="chain" id="PRO_0000283975" description="Envelope small membrane protein">
    <location>
        <begin position="1"/>
        <end position="84"/>
    </location>
</feature>
<feature type="topological domain" description="Virion surface" evidence="1">
    <location>
        <begin position="1"/>
        <end position="18"/>
    </location>
</feature>
<feature type="transmembrane region" description="Helical" evidence="1">
    <location>
        <begin position="19"/>
        <end position="39"/>
    </location>
</feature>
<feature type="topological domain" description="Intravirion" evidence="1">
    <location>
        <begin position="40"/>
        <end position="80"/>
    </location>
</feature>
<organism>
    <name type="scientific">Porcine hemagglutinating encephalomyelitis virus (strain 67N)</name>
    <name type="common">HEV-67N</name>
    <dbReference type="NCBI Taxonomy" id="230237"/>
    <lineage>
        <taxon>Viruses</taxon>
        <taxon>Riboviria</taxon>
        <taxon>Orthornavirae</taxon>
        <taxon>Pisuviricota</taxon>
        <taxon>Pisoniviricetes</taxon>
        <taxon>Nidovirales</taxon>
        <taxon>Cornidovirineae</taxon>
        <taxon>Coronaviridae</taxon>
        <taxon>Orthocoronavirinae</taxon>
        <taxon>Betacoronavirus</taxon>
        <taxon>Embecovirus</taxon>
        <taxon>Betacoronavirus 1</taxon>
    </lineage>
</organism>
<keyword id="KW-0053">Apoptosis</keyword>
<keyword id="KW-1040">Host Golgi apparatus</keyword>
<keyword id="KW-1043">Host membrane</keyword>
<keyword id="KW-0472">Membrane</keyword>
<keyword id="KW-1185">Reference proteome</keyword>
<keyword id="KW-0812">Transmembrane</keyword>
<keyword id="KW-1133">Transmembrane helix</keyword>
<proteinExistence type="inferred from homology"/>
<comment type="function">
    <text evidence="1">Plays a central role in virus morphogenesis and assembly. Acts as a viroporin and self-assembles in host membranes forming pentameric protein-lipid pores that allow ion transport. Also plays a role in the induction of apoptosis.</text>
</comment>
<comment type="subunit">
    <text evidence="1">Homopentamer. Interacts with membrane protein M in the budding compartment of the host cell, which is located between endoplasmic reticulum and the Golgi complex. Interacts with Nucleoprotein.</text>
</comment>
<comment type="subcellular location">
    <subcellularLocation>
        <location evidence="1">Host Golgi apparatus membrane</location>
        <topology evidence="1">Single-pass type III membrane protein</topology>
    </subcellularLocation>
    <text evidence="1">The cytoplasmic tail functions as a Golgi complex-targeting signal.</text>
</comment>
<comment type="similarity">
    <text evidence="1">Belongs to the betacoronaviruses E protein family.</text>
</comment>
<accession>P0C2Q8</accession>
<accession>Q84730</accession>
<gene>
    <name evidence="1" type="primary">E</name>
    <name type="synonym">sM</name>
    <name type="ORF">5b</name>
</gene>
<dbReference type="EMBL" id="X89861">
    <property type="protein sequence ID" value="CAA61958.1"/>
    <property type="molecule type" value="Genomic_RNA"/>
</dbReference>
<dbReference type="EMBL" id="AY078417">
    <property type="protein sequence ID" value="AAL80034.1"/>
    <property type="molecule type" value="Genomic_RNA"/>
</dbReference>
<dbReference type="PIR" id="S58183">
    <property type="entry name" value="S58183"/>
</dbReference>
<dbReference type="Proteomes" id="UP000007546">
    <property type="component" value="Genome"/>
</dbReference>
<dbReference type="GO" id="GO:0044178">
    <property type="term" value="C:host cell Golgi membrane"/>
    <property type="evidence" value="ECO:0007669"/>
    <property type="project" value="UniProtKB-SubCell"/>
</dbReference>
<dbReference type="GO" id="GO:0016020">
    <property type="term" value="C:membrane"/>
    <property type="evidence" value="ECO:0007669"/>
    <property type="project" value="UniProtKB-UniRule"/>
</dbReference>
<dbReference type="GO" id="GO:0140975">
    <property type="term" value="P:disruption of cellular anatomical structure in another organism"/>
    <property type="evidence" value="ECO:0007669"/>
    <property type="project" value="UniProtKB-UniRule"/>
</dbReference>
<dbReference type="GO" id="GO:0046760">
    <property type="term" value="P:viral budding from Golgi membrane"/>
    <property type="evidence" value="ECO:0007669"/>
    <property type="project" value="UniProtKB-UniRule"/>
</dbReference>
<dbReference type="CDD" id="cd21532">
    <property type="entry name" value="HKU1-CoV-like_E"/>
    <property type="match status" value="1"/>
</dbReference>
<dbReference type="HAMAP" id="MF_04204">
    <property type="entry name" value="BETA_CORONA_E"/>
    <property type="match status" value="1"/>
</dbReference>
<dbReference type="InterPro" id="IPR043506">
    <property type="entry name" value="E_protein_bCoV"/>
</dbReference>
<dbReference type="InterPro" id="IPR003873">
    <property type="entry name" value="E_protein_CoV"/>
</dbReference>
<dbReference type="Pfam" id="PF02723">
    <property type="entry name" value="CoV_E"/>
    <property type="match status" value="1"/>
</dbReference>
<dbReference type="PROSITE" id="PS51926">
    <property type="entry name" value="COV_E"/>
    <property type="match status" value="1"/>
</dbReference>
<reference key="1">
    <citation type="journal article" date="1996" name="J. Gen. Virol.">
        <title>The region between the M and S genes of the porcine hemagglutinating encephalomyelitis virus is highly homologous to human coronavirus OC43.</title>
        <authorList>
            <person name="Vieler E."/>
            <person name="Schlapp T."/>
            <person name="Herbst W."/>
        </authorList>
    </citation>
    <scope>NUCLEOTIDE SEQUENCE [GENOMIC RNA]</scope>
</reference>
<reference key="2">
    <citation type="journal article" date="2002" name="J. Gen. Virol.">
        <title>Sequence of the 3'-terminal end (8.1 kb) of the genome of porcine haemagglutinating encephalomyelitis virus: comparison with other haemagglutinating coronaviruses.</title>
        <authorList>
            <person name="Sasseville A.M.-J."/>
            <person name="Boutin M."/>
            <person name="Gelinas A.-M."/>
            <person name="Dea S."/>
        </authorList>
    </citation>
    <scope>NUCLEOTIDE SEQUENCE [GENOMIC RNA]</scope>
</reference>
<protein>
    <recommendedName>
        <fullName evidence="1">Envelope small membrane protein</fullName>
        <shortName evidence="1">E protein</shortName>
        <shortName evidence="1">sM protein</shortName>
    </recommendedName>
</protein>
<sequence>MFMADAYLADTVWYVGQIIFIVAICLLVIIVVVAFLATFKLCIQLCGMCNTLVLSPSIYVFNRGRQFYEFYNDVKPPVLDVDDV</sequence>
<organismHost>
    <name type="scientific">Sus scrofa</name>
    <name type="common">Pig</name>
    <dbReference type="NCBI Taxonomy" id="9823"/>
</organismHost>
<name>VEMP_CVP67</name>
<evidence type="ECO:0000255" key="1">
    <source>
        <dbReference type="HAMAP-Rule" id="MF_04204"/>
    </source>
</evidence>